<accession>Q32G46</accession>
<reference key="1">
    <citation type="journal article" date="2005" name="Nucleic Acids Res.">
        <title>Genome dynamics and diversity of Shigella species, the etiologic agents of bacillary dysentery.</title>
        <authorList>
            <person name="Yang F."/>
            <person name="Yang J."/>
            <person name="Zhang X."/>
            <person name="Chen L."/>
            <person name="Jiang Y."/>
            <person name="Yan Y."/>
            <person name="Tang X."/>
            <person name="Wang J."/>
            <person name="Xiong Z."/>
            <person name="Dong J."/>
            <person name="Xue Y."/>
            <person name="Zhu Y."/>
            <person name="Xu X."/>
            <person name="Sun L."/>
            <person name="Chen S."/>
            <person name="Nie H."/>
            <person name="Peng J."/>
            <person name="Xu J."/>
            <person name="Wang Y."/>
            <person name="Yuan Z."/>
            <person name="Wen Y."/>
            <person name="Yao Z."/>
            <person name="Shen Y."/>
            <person name="Qiang B."/>
            <person name="Hou Y."/>
            <person name="Yu J."/>
            <person name="Jin Q."/>
        </authorList>
    </citation>
    <scope>NUCLEOTIDE SEQUENCE [LARGE SCALE GENOMIC DNA]</scope>
    <source>
        <strain>Sd197</strain>
    </source>
</reference>
<organism>
    <name type="scientific">Shigella dysenteriae serotype 1 (strain Sd197)</name>
    <dbReference type="NCBI Taxonomy" id="300267"/>
    <lineage>
        <taxon>Bacteria</taxon>
        <taxon>Pseudomonadati</taxon>
        <taxon>Pseudomonadota</taxon>
        <taxon>Gammaproteobacteria</taxon>
        <taxon>Enterobacterales</taxon>
        <taxon>Enterobacteriaceae</taxon>
        <taxon>Shigella</taxon>
    </lineage>
</organism>
<protein>
    <recommendedName>
        <fullName evidence="1">UPF0060 membrane protein YnfA</fullName>
    </recommendedName>
</protein>
<name>YNFA_SHIDS</name>
<gene>
    <name evidence="1" type="primary">ynfA</name>
    <name type="ordered locus">SDY_1577</name>
</gene>
<comment type="subcellular location">
    <subcellularLocation>
        <location evidence="1">Cell inner membrane</location>
        <topology evidence="1">Multi-pass membrane protein</topology>
    </subcellularLocation>
</comment>
<comment type="similarity">
    <text evidence="1">Belongs to the UPF0060 family.</text>
</comment>
<evidence type="ECO:0000255" key="1">
    <source>
        <dbReference type="HAMAP-Rule" id="MF_00010"/>
    </source>
</evidence>
<proteinExistence type="inferred from homology"/>
<sequence>MIKTTLLFFATALCEIIGCFLPWLWLKRNASIWLLLPAGISLALFVWLLTLHPAASGRIYAAYGGVYVCTALMWLRVVDGVKLTLYDWTGALIALCGMLIIVAGWGRT</sequence>
<dbReference type="EMBL" id="CP000034">
    <property type="protein sequence ID" value="ABB61709.1"/>
    <property type="molecule type" value="Genomic_DNA"/>
</dbReference>
<dbReference type="RefSeq" id="WP_005022787.1">
    <property type="nucleotide sequence ID" value="NC_007606.1"/>
</dbReference>
<dbReference type="RefSeq" id="YP_403200.1">
    <property type="nucleotide sequence ID" value="NC_007606.1"/>
</dbReference>
<dbReference type="SMR" id="Q32G46"/>
<dbReference type="EnsemblBacteria" id="ABB61709">
    <property type="protein sequence ID" value="ABB61709"/>
    <property type="gene ID" value="SDY_1577"/>
</dbReference>
<dbReference type="KEGG" id="sdy:SDY_1577"/>
<dbReference type="PATRIC" id="fig|300267.13.peg.1893"/>
<dbReference type="HOGENOM" id="CLU_117653_2_1_6"/>
<dbReference type="Proteomes" id="UP000002716">
    <property type="component" value="Chromosome"/>
</dbReference>
<dbReference type="GO" id="GO:0005886">
    <property type="term" value="C:plasma membrane"/>
    <property type="evidence" value="ECO:0007669"/>
    <property type="project" value="UniProtKB-SubCell"/>
</dbReference>
<dbReference type="HAMAP" id="MF_00010">
    <property type="entry name" value="UPF0060"/>
    <property type="match status" value="1"/>
</dbReference>
<dbReference type="InterPro" id="IPR003844">
    <property type="entry name" value="UPF0060"/>
</dbReference>
<dbReference type="NCBIfam" id="NF002586">
    <property type="entry name" value="PRK02237.1"/>
    <property type="match status" value="1"/>
</dbReference>
<dbReference type="PANTHER" id="PTHR36116">
    <property type="entry name" value="UPF0060 MEMBRANE PROTEIN YNFA"/>
    <property type="match status" value="1"/>
</dbReference>
<dbReference type="PANTHER" id="PTHR36116:SF1">
    <property type="entry name" value="UPF0060 MEMBRANE PROTEIN YNFA"/>
    <property type="match status" value="1"/>
</dbReference>
<dbReference type="Pfam" id="PF02694">
    <property type="entry name" value="UPF0060"/>
    <property type="match status" value="1"/>
</dbReference>
<dbReference type="SUPFAM" id="SSF103481">
    <property type="entry name" value="Multidrug resistance efflux transporter EmrE"/>
    <property type="match status" value="1"/>
</dbReference>
<feature type="chain" id="PRO_0000282265" description="UPF0060 membrane protein YnfA">
    <location>
        <begin position="1"/>
        <end position="108"/>
    </location>
</feature>
<feature type="topological domain" description="Periplasmic" evidence="1">
    <location>
        <begin position="1"/>
        <end position="5"/>
    </location>
</feature>
<feature type="transmembrane region" description="Helical" evidence="1">
    <location>
        <begin position="6"/>
        <end position="26"/>
    </location>
</feature>
<feature type="topological domain" description="Cytoplasmic" evidence="1">
    <location>
        <begin position="27"/>
        <end position="30"/>
    </location>
</feature>
<feature type="transmembrane region" description="Helical" evidence="1">
    <location>
        <begin position="31"/>
        <end position="51"/>
    </location>
</feature>
<feature type="topological domain" description="Periplasmic" evidence="1">
    <location>
        <begin position="52"/>
        <end position="60"/>
    </location>
</feature>
<feature type="transmembrane region" description="Helical" evidence="1">
    <location>
        <begin position="61"/>
        <end position="81"/>
    </location>
</feature>
<feature type="topological domain" description="Cytoplasmic" evidence="1">
    <location>
        <begin position="82"/>
        <end position="84"/>
    </location>
</feature>
<feature type="transmembrane region" description="Helical" evidence="1">
    <location>
        <begin position="85"/>
        <end position="105"/>
    </location>
</feature>
<feature type="topological domain" description="Periplasmic" evidence="1">
    <location>
        <begin position="106"/>
        <end position="108"/>
    </location>
</feature>
<keyword id="KW-0997">Cell inner membrane</keyword>
<keyword id="KW-1003">Cell membrane</keyword>
<keyword id="KW-0472">Membrane</keyword>
<keyword id="KW-1185">Reference proteome</keyword>
<keyword id="KW-0812">Transmembrane</keyword>
<keyword id="KW-1133">Transmembrane helix</keyword>